<reference key="1">
    <citation type="journal article" date="2005" name="Science">
        <title>The transcriptional landscape of the mammalian genome.</title>
        <authorList>
            <person name="Carninci P."/>
            <person name="Kasukawa T."/>
            <person name="Katayama S."/>
            <person name="Gough J."/>
            <person name="Frith M.C."/>
            <person name="Maeda N."/>
            <person name="Oyama R."/>
            <person name="Ravasi T."/>
            <person name="Lenhard B."/>
            <person name="Wells C."/>
            <person name="Kodzius R."/>
            <person name="Shimokawa K."/>
            <person name="Bajic V.B."/>
            <person name="Brenner S.E."/>
            <person name="Batalov S."/>
            <person name="Forrest A.R."/>
            <person name="Zavolan M."/>
            <person name="Davis M.J."/>
            <person name="Wilming L.G."/>
            <person name="Aidinis V."/>
            <person name="Allen J.E."/>
            <person name="Ambesi-Impiombato A."/>
            <person name="Apweiler R."/>
            <person name="Aturaliya R.N."/>
            <person name="Bailey T.L."/>
            <person name="Bansal M."/>
            <person name="Baxter L."/>
            <person name="Beisel K.W."/>
            <person name="Bersano T."/>
            <person name="Bono H."/>
            <person name="Chalk A.M."/>
            <person name="Chiu K.P."/>
            <person name="Choudhary V."/>
            <person name="Christoffels A."/>
            <person name="Clutterbuck D.R."/>
            <person name="Crowe M.L."/>
            <person name="Dalla E."/>
            <person name="Dalrymple B.P."/>
            <person name="de Bono B."/>
            <person name="Della Gatta G."/>
            <person name="di Bernardo D."/>
            <person name="Down T."/>
            <person name="Engstrom P."/>
            <person name="Fagiolini M."/>
            <person name="Faulkner G."/>
            <person name="Fletcher C.F."/>
            <person name="Fukushima T."/>
            <person name="Furuno M."/>
            <person name="Futaki S."/>
            <person name="Gariboldi M."/>
            <person name="Georgii-Hemming P."/>
            <person name="Gingeras T.R."/>
            <person name="Gojobori T."/>
            <person name="Green R.E."/>
            <person name="Gustincich S."/>
            <person name="Harbers M."/>
            <person name="Hayashi Y."/>
            <person name="Hensch T.K."/>
            <person name="Hirokawa N."/>
            <person name="Hill D."/>
            <person name="Huminiecki L."/>
            <person name="Iacono M."/>
            <person name="Ikeo K."/>
            <person name="Iwama A."/>
            <person name="Ishikawa T."/>
            <person name="Jakt M."/>
            <person name="Kanapin A."/>
            <person name="Katoh M."/>
            <person name="Kawasawa Y."/>
            <person name="Kelso J."/>
            <person name="Kitamura H."/>
            <person name="Kitano H."/>
            <person name="Kollias G."/>
            <person name="Krishnan S.P."/>
            <person name="Kruger A."/>
            <person name="Kummerfeld S.K."/>
            <person name="Kurochkin I.V."/>
            <person name="Lareau L.F."/>
            <person name="Lazarevic D."/>
            <person name="Lipovich L."/>
            <person name="Liu J."/>
            <person name="Liuni S."/>
            <person name="McWilliam S."/>
            <person name="Madan Babu M."/>
            <person name="Madera M."/>
            <person name="Marchionni L."/>
            <person name="Matsuda H."/>
            <person name="Matsuzawa S."/>
            <person name="Miki H."/>
            <person name="Mignone F."/>
            <person name="Miyake S."/>
            <person name="Morris K."/>
            <person name="Mottagui-Tabar S."/>
            <person name="Mulder N."/>
            <person name="Nakano N."/>
            <person name="Nakauchi H."/>
            <person name="Ng P."/>
            <person name="Nilsson R."/>
            <person name="Nishiguchi S."/>
            <person name="Nishikawa S."/>
            <person name="Nori F."/>
            <person name="Ohara O."/>
            <person name="Okazaki Y."/>
            <person name="Orlando V."/>
            <person name="Pang K.C."/>
            <person name="Pavan W.J."/>
            <person name="Pavesi G."/>
            <person name="Pesole G."/>
            <person name="Petrovsky N."/>
            <person name="Piazza S."/>
            <person name="Reed J."/>
            <person name="Reid J.F."/>
            <person name="Ring B.Z."/>
            <person name="Ringwald M."/>
            <person name="Rost B."/>
            <person name="Ruan Y."/>
            <person name="Salzberg S.L."/>
            <person name="Sandelin A."/>
            <person name="Schneider C."/>
            <person name="Schoenbach C."/>
            <person name="Sekiguchi K."/>
            <person name="Semple C.A."/>
            <person name="Seno S."/>
            <person name="Sessa L."/>
            <person name="Sheng Y."/>
            <person name="Shibata Y."/>
            <person name="Shimada H."/>
            <person name="Shimada K."/>
            <person name="Silva D."/>
            <person name="Sinclair B."/>
            <person name="Sperling S."/>
            <person name="Stupka E."/>
            <person name="Sugiura K."/>
            <person name="Sultana R."/>
            <person name="Takenaka Y."/>
            <person name="Taki K."/>
            <person name="Tammoja K."/>
            <person name="Tan S.L."/>
            <person name="Tang S."/>
            <person name="Taylor M.S."/>
            <person name="Tegner J."/>
            <person name="Teichmann S.A."/>
            <person name="Ueda H.R."/>
            <person name="van Nimwegen E."/>
            <person name="Verardo R."/>
            <person name="Wei C.L."/>
            <person name="Yagi K."/>
            <person name="Yamanishi H."/>
            <person name="Zabarovsky E."/>
            <person name="Zhu S."/>
            <person name="Zimmer A."/>
            <person name="Hide W."/>
            <person name="Bult C."/>
            <person name="Grimmond S.M."/>
            <person name="Teasdale R.D."/>
            <person name="Liu E.T."/>
            <person name="Brusic V."/>
            <person name="Quackenbush J."/>
            <person name="Wahlestedt C."/>
            <person name="Mattick J.S."/>
            <person name="Hume D.A."/>
            <person name="Kai C."/>
            <person name="Sasaki D."/>
            <person name="Tomaru Y."/>
            <person name="Fukuda S."/>
            <person name="Kanamori-Katayama M."/>
            <person name="Suzuki M."/>
            <person name="Aoki J."/>
            <person name="Arakawa T."/>
            <person name="Iida J."/>
            <person name="Imamura K."/>
            <person name="Itoh M."/>
            <person name="Kato T."/>
            <person name="Kawaji H."/>
            <person name="Kawagashira N."/>
            <person name="Kawashima T."/>
            <person name="Kojima M."/>
            <person name="Kondo S."/>
            <person name="Konno H."/>
            <person name="Nakano K."/>
            <person name="Ninomiya N."/>
            <person name="Nishio T."/>
            <person name="Okada M."/>
            <person name="Plessy C."/>
            <person name="Shibata K."/>
            <person name="Shiraki T."/>
            <person name="Suzuki S."/>
            <person name="Tagami M."/>
            <person name="Waki K."/>
            <person name="Watahiki A."/>
            <person name="Okamura-Oho Y."/>
            <person name="Suzuki H."/>
            <person name="Kawai J."/>
            <person name="Hayashizaki Y."/>
        </authorList>
    </citation>
    <scope>NUCLEOTIDE SEQUENCE [LARGE SCALE MRNA] (ISOFORMS 1; 2 AND 3)</scope>
    <source>
        <strain>C57BL/6J</strain>
        <tissue>Cerebellum</tissue>
        <tissue>Liver</tissue>
        <tissue>Testis</tissue>
    </source>
</reference>
<reference key="2">
    <citation type="journal article" date="2004" name="Genome Res.">
        <title>The status, quality, and expansion of the NIH full-length cDNA project: the Mammalian Gene Collection (MGC).</title>
        <authorList>
            <consortium name="The MGC Project Team"/>
        </authorList>
    </citation>
    <scope>NUCLEOTIDE SEQUENCE [LARGE SCALE MRNA] (ISOFORM 2)</scope>
</reference>
<reference key="3">
    <citation type="journal article" date="2024" name="Biol. Reprod.">
        <title>Coiled-coil domain containing 159 is required for spermatid head and tail assembly in mice.</title>
        <authorList>
            <person name="Ge T."/>
            <person name="Yuan L."/>
            <person name="Xu L."/>
            <person name="Yang F."/>
            <person name="Xu W."/>
            <person name="Niu C."/>
            <person name="Li G."/>
            <person name="Zhou H."/>
            <person name="Zheng Y."/>
        </authorList>
    </citation>
    <scope>FUNCTION</scope>
    <scope>INTERACTION WITH DYNLT2; GGNBP1 AND OSBP2</scope>
    <scope>SUBCELLULAR LOCATION</scope>
    <scope>TISSUE SPECIFICITY</scope>
    <scope>DEVELOPMENTAL STAGE</scope>
</reference>
<evidence type="ECO:0000255" key="1"/>
<evidence type="ECO:0000256" key="2">
    <source>
        <dbReference type="SAM" id="MobiDB-lite"/>
    </source>
</evidence>
<evidence type="ECO:0000269" key="3">
    <source>
    </source>
</evidence>
<evidence type="ECO:0000303" key="4">
    <source>
    </source>
</evidence>
<evidence type="ECO:0000303" key="5">
    <source>
    </source>
</evidence>
<evidence type="ECO:0000305" key="6"/>
<keyword id="KW-0025">Alternative splicing</keyword>
<keyword id="KW-0175">Coiled coil</keyword>
<keyword id="KW-0221">Differentiation</keyword>
<keyword id="KW-1185">Reference proteome</keyword>
<keyword id="KW-0744">Spermatogenesis</keyword>
<dbReference type="EMBL" id="AK011114">
    <property type="protein sequence ID" value="BAB27409.1"/>
    <property type="molecule type" value="mRNA"/>
</dbReference>
<dbReference type="EMBL" id="AK016073">
    <property type="protein sequence ID" value="BAB30102.1"/>
    <property type="molecule type" value="mRNA"/>
</dbReference>
<dbReference type="EMBL" id="AK042884">
    <property type="protein sequence ID" value="BAC31391.1"/>
    <property type="molecule type" value="mRNA"/>
</dbReference>
<dbReference type="EMBL" id="BC120702">
    <property type="protein sequence ID" value="AAI20703.1"/>
    <property type="molecule type" value="mRNA"/>
</dbReference>
<dbReference type="EMBL" id="BC120704">
    <property type="protein sequence ID" value="AAI20705.1"/>
    <property type="molecule type" value="mRNA"/>
</dbReference>
<dbReference type="CCDS" id="CCDS40557.1">
    <molecule id="Q8C963-2"/>
</dbReference>
<dbReference type="CCDS" id="CCDS52738.1">
    <molecule id="Q8C963-1"/>
</dbReference>
<dbReference type="RefSeq" id="NP_001158086.1">
    <molecule id="Q8C963-1"/>
    <property type="nucleotide sequence ID" value="NM_001164614.1"/>
</dbReference>
<dbReference type="RefSeq" id="NP_080253.2">
    <molecule id="Q8C963-2"/>
    <property type="nucleotide sequence ID" value="NM_025977.3"/>
</dbReference>
<dbReference type="SMR" id="Q8C963"/>
<dbReference type="FunCoup" id="Q8C963">
    <property type="interactions" value="6"/>
</dbReference>
<dbReference type="STRING" id="10090.ENSMUSP00000126474"/>
<dbReference type="iPTMnet" id="Q8C963"/>
<dbReference type="PhosphoSitePlus" id="Q8C963"/>
<dbReference type="PaxDb" id="10090-ENSMUSP00000126474"/>
<dbReference type="ProteomicsDB" id="265292">
    <molecule id="Q8C963-1"/>
</dbReference>
<dbReference type="ProteomicsDB" id="265293">
    <molecule id="Q8C963-2"/>
</dbReference>
<dbReference type="ProteomicsDB" id="265294">
    <molecule id="Q8C963-3"/>
</dbReference>
<dbReference type="Antibodypedia" id="52093">
    <property type="antibodies" value="16 antibodies from 8 providers"/>
</dbReference>
<dbReference type="Ensembl" id="ENSMUST00000006403.7">
    <molecule id="Q8C963-2"/>
    <property type="protein sequence ID" value="ENSMUSP00000006403.7"/>
    <property type="gene ID" value="ENSMUSG00000006241.17"/>
</dbReference>
<dbReference type="Ensembl" id="ENSMUST00000170304.9">
    <molecule id="Q8C963-1"/>
    <property type="protein sequence ID" value="ENSMUSP00000126474.2"/>
    <property type="gene ID" value="ENSMUSG00000006241.17"/>
</dbReference>
<dbReference type="Ensembl" id="ENSMUST00000214734.2">
    <molecule id="Q8C963-3"/>
    <property type="protein sequence ID" value="ENSMUSP00000150744.2"/>
    <property type="gene ID" value="ENSMUSG00000006241.17"/>
</dbReference>
<dbReference type="GeneID" id="67119"/>
<dbReference type="KEGG" id="mmu:67119"/>
<dbReference type="UCSC" id="uc009omx.1">
    <molecule id="Q8C963-2"/>
    <property type="organism name" value="mouse"/>
</dbReference>
<dbReference type="UCSC" id="uc009omy.2">
    <molecule id="Q8C963-3"/>
    <property type="organism name" value="mouse"/>
</dbReference>
<dbReference type="UCSC" id="uc009omz.2">
    <molecule id="Q8C963-1"/>
    <property type="organism name" value="mouse"/>
</dbReference>
<dbReference type="AGR" id="MGI:1914369"/>
<dbReference type="CTD" id="126075"/>
<dbReference type="MGI" id="MGI:1914369">
    <property type="gene designation" value="Ccdc159"/>
</dbReference>
<dbReference type="VEuPathDB" id="HostDB:ENSMUSG00000006241"/>
<dbReference type="eggNOG" id="ENOG502S2FS">
    <property type="taxonomic scope" value="Eukaryota"/>
</dbReference>
<dbReference type="GeneTree" id="ENSGT00390000008201"/>
<dbReference type="HOGENOM" id="CLU_686891_0_0_1"/>
<dbReference type="InParanoid" id="Q8C963"/>
<dbReference type="OMA" id="VTCIYQK"/>
<dbReference type="OrthoDB" id="8935875at2759"/>
<dbReference type="PhylomeDB" id="Q8C963"/>
<dbReference type="TreeFam" id="TF337495"/>
<dbReference type="BioGRID-ORCS" id="67119">
    <property type="hits" value="0 hits in 77 CRISPR screens"/>
</dbReference>
<dbReference type="PRO" id="PR:Q8C963"/>
<dbReference type="Proteomes" id="UP000000589">
    <property type="component" value="Chromosome 9"/>
</dbReference>
<dbReference type="RNAct" id="Q8C963">
    <property type="molecule type" value="protein"/>
</dbReference>
<dbReference type="Bgee" id="ENSMUSG00000006241">
    <property type="expression patterns" value="Expressed in seminiferous tubule of testis and 71 other cell types or tissues"/>
</dbReference>
<dbReference type="ExpressionAtlas" id="Q8C963">
    <property type="expression patterns" value="baseline and differential"/>
</dbReference>
<dbReference type="GO" id="GO:0120212">
    <property type="term" value="C:sperm head-tail coupling apparatus"/>
    <property type="evidence" value="ECO:0000314"/>
    <property type="project" value="MGI"/>
</dbReference>
<dbReference type="GO" id="GO:0010467">
    <property type="term" value="P:gene expression"/>
    <property type="evidence" value="ECO:0000315"/>
    <property type="project" value="MGI"/>
</dbReference>
<dbReference type="GO" id="GO:0007338">
    <property type="term" value="P:single fertilization"/>
    <property type="evidence" value="ECO:0000315"/>
    <property type="project" value="MGI"/>
</dbReference>
<dbReference type="GO" id="GO:0120316">
    <property type="term" value="P:sperm flagellum assembly"/>
    <property type="evidence" value="ECO:0000315"/>
    <property type="project" value="MGI"/>
</dbReference>
<dbReference type="GO" id="GO:0007286">
    <property type="term" value="P:spermatid development"/>
    <property type="evidence" value="ECO:0000315"/>
    <property type="project" value="UniProtKB"/>
</dbReference>
<dbReference type="GO" id="GO:0007283">
    <property type="term" value="P:spermatogenesis"/>
    <property type="evidence" value="ECO:0000315"/>
    <property type="project" value="MGI"/>
</dbReference>
<dbReference type="InterPro" id="IPR039284">
    <property type="entry name" value="CCDC159/163"/>
</dbReference>
<dbReference type="PANTHER" id="PTHR34533:SF1">
    <property type="entry name" value="COILED-COIL DOMAIN-CONTAINING PROTEIN 159"/>
    <property type="match status" value="1"/>
</dbReference>
<dbReference type="PANTHER" id="PTHR34533">
    <property type="entry name" value="TRANSMEMBRANE PROTEIN CCDC163"/>
    <property type="match status" value="1"/>
</dbReference>
<organism>
    <name type="scientific">Mus musculus</name>
    <name type="common">Mouse</name>
    <dbReference type="NCBI Taxonomy" id="10090"/>
    <lineage>
        <taxon>Eukaryota</taxon>
        <taxon>Metazoa</taxon>
        <taxon>Chordata</taxon>
        <taxon>Craniata</taxon>
        <taxon>Vertebrata</taxon>
        <taxon>Euteleostomi</taxon>
        <taxon>Mammalia</taxon>
        <taxon>Eutheria</taxon>
        <taxon>Euarchontoglires</taxon>
        <taxon>Glires</taxon>
        <taxon>Rodentia</taxon>
        <taxon>Myomorpha</taxon>
        <taxon>Muroidea</taxon>
        <taxon>Muridae</taxon>
        <taxon>Murinae</taxon>
        <taxon>Mus</taxon>
        <taxon>Mus</taxon>
    </lineage>
</organism>
<accession>Q8C963</accession>
<accession>Q0VBB7</accession>
<accession>Q9CXZ5</accession>
<accession>Q9D4W5</accession>
<proteinExistence type="evidence at protein level"/>
<sequence>MGEHERVVCCSSDSLLAGLSRDSDDCVSHLCTPPLLAITSWAAKERSQYSPPPGEPGPSSDKALDCMTHWSRVLEPEIVNTASEQAGKSGAWEKEWDSEPQPHEGTPCSSSDVNKDHYHDQDLVKRNHCVAKKSLEPSSAKVKVKNTMIIPDSQKLLRCELESLRSQLQAQSKAFEFLNHSVTMLEKESCLQQIKIQQLEEVLSPTSRQGEKYGRKWSTEQELYGALAQGLQGLQKTLKEGEELQRARTTRCLQLLAREIRDSKKFLWEELELVREEVTFIYQKLQDQEDEISENLLNIQKMQKTQVKCRKVLTKMKQQAYDSWPEAEGVPTEGNGCCKDDLQKELGDIWSAVHSLQSSIDCLALSMGTRPRASSLRGQKGHQCKSSQCPSWDSDSDWERPFSKSGSYPPA</sequence>
<gene>
    <name type="primary">Ccdc159</name>
</gene>
<name>CC159_MOUSE</name>
<comment type="function">
    <text evidence="3">Functions during spermatid development; may participate in the centrosome reduction procedure of spermatids and is required for the formation of the connecting piece/sperm head-tail coupling apparatus (HTCA) and the correct and tight attachment of the flagellum to the nuclear envelope.</text>
</comment>
<comment type="subunit">
    <text evidence="3">Interacts with DYNLT2 (PubMed:38236177). Interacts with GGNBP1 (PubMed:38236177). Interacts with OSBP2 (PubMed:38236177).</text>
</comment>
<comment type="subcellular location">
    <text evidence="3">Localizes to the spermatid head-tail coupling apparatus (HTCA) during spermatogenesis.</text>
</comment>
<comment type="alternative products">
    <event type="alternative splicing"/>
    <isoform>
        <id>Q8C963-1</id>
        <name>1</name>
        <sequence type="displayed"/>
    </isoform>
    <isoform>
        <id>Q8C963-2</id>
        <name>2</name>
        <sequence type="described" ref="VSP_033427"/>
    </isoform>
    <isoform>
        <id>Q8C963-3</id>
        <name>3</name>
        <sequence type="described" ref="VSP_033428 VSP_033429"/>
    </isoform>
</comment>
<comment type="tissue specificity">
    <text evidence="3">Expressed in spermatids but undetectable in the spermatozoon (at protein level) (PubMed:38236177). Highly expressed in the testis (at protein level) (PubMed:38236177).</text>
</comment>
<comment type="developmental stage">
    <text evidence="3">Expression is first apparent at postnatal day 28 when round spermatids appear, after which its expression remains constant.</text>
</comment>
<feature type="chain" id="PRO_0000332997" description="Coiled-coil domain-containing protein 159">
    <location>
        <begin position="1"/>
        <end position="411"/>
    </location>
</feature>
<feature type="region of interest" description="Disordered" evidence="2">
    <location>
        <begin position="84"/>
        <end position="113"/>
    </location>
</feature>
<feature type="region of interest" description="Disordered" evidence="2">
    <location>
        <begin position="372"/>
        <end position="411"/>
    </location>
</feature>
<feature type="coiled-coil region" evidence="1">
    <location>
        <begin position="269"/>
        <end position="305"/>
    </location>
</feature>
<feature type="compositionally biased region" description="Basic and acidic residues" evidence="2">
    <location>
        <begin position="91"/>
        <end position="102"/>
    </location>
</feature>
<feature type="compositionally biased region" description="Polar residues" evidence="2">
    <location>
        <begin position="384"/>
        <end position="393"/>
    </location>
</feature>
<feature type="splice variant" id="VSP_033427" description="In isoform 2." evidence="4 5">
    <original>MGEHERVVCCSS</original>
    <variation>MNGC</variation>
    <location>
        <begin position="1"/>
        <end position="12"/>
    </location>
</feature>
<feature type="splice variant" id="VSP_033428" description="In isoform 3." evidence="5">
    <original>SKKFL</original>
    <variation>RGPGG</variation>
    <location>
        <begin position="263"/>
        <end position="267"/>
    </location>
</feature>
<feature type="splice variant" id="VSP_033429" description="In isoform 3." evidence="5">
    <location>
        <begin position="268"/>
        <end position="411"/>
    </location>
</feature>
<feature type="sequence conflict" description="In Ref. 1; BAB27409." evidence="6" ref="1">
    <original>E</original>
    <variation>D</variation>
    <location>
        <position position="55"/>
    </location>
</feature>
<protein>
    <recommendedName>
        <fullName>Coiled-coil domain-containing protein 159</fullName>
    </recommendedName>
</protein>